<organism>
    <name type="scientific">Phenylobacterium zucineum (strain HLK1)</name>
    <dbReference type="NCBI Taxonomy" id="450851"/>
    <lineage>
        <taxon>Bacteria</taxon>
        <taxon>Pseudomonadati</taxon>
        <taxon>Pseudomonadota</taxon>
        <taxon>Alphaproteobacteria</taxon>
        <taxon>Caulobacterales</taxon>
        <taxon>Caulobacteraceae</taxon>
        <taxon>Phenylobacterium</taxon>
    </lineage>
</organism>
<sequence>MRYLPLTPEDRAQMLGVIGAPDVDALFADVPAAARNPAIGLAPHAGELEVERELSGLAALNRAAGAGPFFCGAGAYRHHVPATVDHIIQRSEFLTSYTPYQPEIAQGTLQVLFEFQTQVARLTGLDVANASMYDGSTACAEAVMMAQRVTRREKAILSGGLHPHYAATTQTIAHAEGMEIVRQPAAIDAEAAVIEAIDAETACVVVQTPNVFGVVTDVSKIAEAAHAKGALLIVVTTEAVAYGLLKSPGEMGADIAVAEGQSIGNALNYGGPYVGLFACREKFVRNMPGRLCGETVDAEGRRGYVLTLSTREQHIRREKATSNICTNSGLCALAFSIHLSLLGGKGLSQLARVNHARARELKAAVEAAGLEVLTPRFFNEIAVRTKGPAADLVERLLADGVVAGVPFSRLDPGAGLDDVLLLCATETTTSDDIAALKDALAR</sequence>
<name>GCSPA_PHEZH</name>
<evidence type="ECO:0000255" key="1">
    <source>
        <dbReference type="HAMAP-Rule" id="MF_00712"/>
    </source>
</evidence>
<comment type="function">
    <text evidence="1">The glycine cleavage system catalyzes the degradation of glycine. The P protein binds the alpha-amino group of glycine through its pyridoxal phosphate cofactor; CO(2) is released and the remaining methylamine moiety is then transferred to the lipoamide cofactor of the H protein.</text>
</comment>
<comment type="catalytic activity">
    <reaction evidence="1">
        <text>N(6)-[(R)-lipoyl]-L-lysyl-[glycine-cleavage complex H protein] + glycine + H(+) = N(6)-[(R)-S(8)-aminomethyldihydrolipoyl]-L-lysyl-[glycine-cleavage complex H protein] + CO2</text>
        <dbReference type="Rhea" id="RHEA:24304"/>
        <dbReference type="Rhea" id="RHEA-COMP:10494"/>
        <dbReference type="Rhea" id="RHEA-COMP:10495"/>
        <dbReference type="ChEBI" id="CHEBI:15378"/>
        <dbReference type="ChEBI" id="CHEBI:16526"/>
        <dbReference type="ChEBI" id="CHEBI:57305"/>
        <dbReference type="ChEBI" id="CHEBI:83099"/>
        <dbReference type="ChEBI" id="CHEBI:83143"/>
        <dbReference type="EC" id="1.4.4.2"/>
    </reaction>
</comment>
<comment type="subunit">
    <text evidence="1">The glycine cleavage system is composed of four proteins: P, T, L and H. In this organism, the P 'protein' is a heterodimer of two subunits.</text>
</comment>
<comment type="similarity">
    <text evidence="1">Belongs to the GcvP family. N-terminal subunit subfamily.</text>
</comment>
<gene>
    <name evidence="1" type="primary">gcvPA</name>
    <name type="ordered locus">PHZ_c0590</name>
</gene>
<keyword id="KW-0560">Oxidoreductase</keyword>
<keyword id="KW-1185">Reference proteome</keyword>
<proteinExistence type="inferred from homology"/>
<accession>B4RF16</accession>
<protein>
    <recommendedName>
        <fullName evidence="1">Probable glycine dehydrogenase (decarboxylating) subunit 1</fullName>
        <ecNumber evidence="1">1.4.4.2</ecNumber>
    </recommendedName>
    <alternativeName>
        <fullName evidence="1">Glycine cleavage system P-protein subunit 1</fullName>
    </alternativeName>
    <alternativeName>
        <fullName evidence="1">Glycine decarboxylase subunit 1</fullName>
    </alternativeName>
    <alternativeName>
        <fullName evidence="1">Glycine dehydrogenase (aminomethyl-transferring) subunit 1</fullName>
    </alternativeName>
</protein>
<dbReference type="EC" id="1.4.4.2" evidence="1"/>
<dbReference type="EMBL" id="CP000747">
    <property type="protein sequence ID" value="ACG77004.1"/>
    <property type="molecule type" value="Genomic_DNA"/>
</dbReference>
<dbReference type="RefSeq" id="WP_012521152.1">
    <property type="nucleotide sequence ID" value="NC_011144.1"/>
</dbReference>
<dbReference type="SMR" id="B4RF16"/>
<dbReference type="STRING" id="450851.PHZ_c0590"/>
<dbReference type="KEGG" id="pzu:PHZ_c0590"/>
<dbReference type="eggNOG" id="COG0403">
    <property type="taxonomic scope" value="Bacteria"/>
</dbReference>
<dbReference type="HOGENOM" id="CLU_004620_0_2_5"/>
<dbReference type="OrthoDB" id="9801272at2"/>
<dbReference type="Proteomes" id="UP000001868">
    <property type="component" value="Chromosome"/>
</dbReference>
<dbReference type="GO" id="GO:0004375">
    <property type="term" value="F:glycine dehydrogenase (decarboxylating) activity"/>
    <property type="evidence" value="ECO:0007669"/>
    <property type="project" value="UniProtKB-EC"/>
</dbReference>
<dbReference type="GO" id="GO:0019464">
    <property type="term" value="P:glycine decarboxylation via glycine cleavage system"/>
    <property type="evidence" value="ECO:0007669"/>
    <property type="project" value="UniProtKB-UniRule"/>
</dbReference>
<dbReference type="GO" id="GO:0009116">
    <property type="term" value="P:nucleoside metabolic process"/>
    <property type="evidence" value="ECO:0007669"/>
    <property type="project" value="InterPro"/>
</dbReference>
<dbReference type="CDD" id="cd00613">
    <property type="entry name" value="GDC-P"/>
    <property type="match status" value="1"/>
</dbReference>
<dbReference type="Gene3D" id="3.90.1150.10">
    <property type="entry name" value="Aspartate Aminotransferase, domain 1"/>
    <property type="match status" value="1"/>
</dbReference>
<dbReference type="Gene3D" id="3.40.640.10">
    <property type="entry name" value="Type I PLP-dependent aspartate aminotransferase-like (Major domain)"/>
    <property type="match status" value="1"/>
</dbReference>
<dbReference type="HAMAP" id="MF_00712">
    <property type="entry name" value="GcvPA"/>
    <property type="match status" value="1"/>
</dbReference>
<dbReference type="InterPro" id="IPR023010">
    <property type="entry name" value="GcvPA"/>
</dbReference>
<dbReference type="InterPro" id="IPR049315">
    <property type="entry name" value="GDC-P_N"/>
</dbReference>
<dbReference type="InterPro" id="IPR020581">
    <property type="entry name" value="GDC_P"/>
</dbReference>
<dbReference type="InterPro" id="IPR015424">
    <property type="entry name" value="PyrdxlP-dep_Trfase"/>
</dbReference>
<dbReference type="InterPro" id="IPR015421">
    <property type="entry name" value="PyrdxlP-dep_Trfase_major"/>
</dbReference>
<dbReference type="InterPro" id="IPR015422">
    <property type="entry name" value="PyrdxlP-dep_Trfase_small"/>
</dbReference>
<dbReference type="NCBIfam" id="NF001696">
    <property type="entry name" value="PRK00451.1"/>
    <property type="match status" value="1"/>
</dbReference>
<dbReference type="PANTHER" id="PTHR42806">
    <property type="entry name" value="GLYCINE CLEAVAGE SYSTEM P-PROTEIN"/>
    <property type="match status" value="1"/>
</dbReference>
<dbReference type="PANTHER" id="PTHR42806:SF1">
    <property type="entry name" value="GLYCINE DEHYDROGENASE (DECARBOXYLATING)"/>
    <property type="match status" value="1"/>
</dbReference>
<dbReference type="Pfam" id="PF02347">
    <property type="entry name" value="GDC-P"/>
    <property type="match status" value="1"/>
</dbReference>
<dbReference type="PIRSF" id="PIRSF006815">
    <property type="entry name" value="GcvPA"/>
    <property type="match status" value="1"/>
</dbReference>
<dbReference type="SUPFAM" id="SSF53383">
    <property type="entry name" value="PLP-dependent transferases"/>
    <property type="match status" value="1"/>
</dbReference>
<feature type="chain" id="PRO_1000132485" description="Probable glycine dehydrogenase (decarboxylating) subunit 1">
    <location>
        <begin position="1"/>
        <end position="442"/>
    </location>
</feature>
<reference key="1">
    <citation type="journal article" date="2008" name="BMC Genomics">
        <title>Complete genome of Phenylobacterium zucineum - a novel facultative intracellular bacterium isolated from human erythroleukemia cell line K562.</title>
        <authorList>
            <person name="Luo Y."/>
            <person name="Xu X."/>
            <person name="Ding Z."/>
            <person name="Liu Z."/>
            <person name="Zhang B."/>
            <person name="Yan Z."/>
            <person name="Sun J."/>
            <person name="Hu S."/>
            <person name="Hu X."/>
        </authorList>
    </citation>
    <scope>NUCLEOTIDE SEQUENCE [LARGE SCALE GENOMIC DNA]</scope>
    <source>
        <strain>HLK1</strain>
    </source>
</reference>